<protein>
    <recommendedName>
        <fullName evidence="1">Anthranilate phosphoribosyltransferase</fullName>
        <ecNumber evidence="1">2.4.2.18</ecNumber>
    </recommendedName>
</protein>
<organism>
    <name type="scientific">Bacillus pumilus</name>
    <name type="common">Bacillus mesentericus</name>
    <dbReference type="NCBI Taxonomy" id="1408"/>
    <lineage>
        <taxon>Bacteria</taxon>
        <taxon>Bacillati</taxon>
        <taxon>Bacillota</taxon>
        <taxon>Bacilli</taxon>
        <taxon>Bacillales</taxon>
        <taxon>Bacillaceae</taxon>
        <taxon>Bacillus</taxon>
    </lineage>
</organism>
<evidence type="ECO:0000255" key="1">
    <source>
        <dbReference type="HAMAP-Rule" id="MF_00211"/>
    </source>
</evidence>
<proteinExistence type="inferred from homology"/>
<feature type="chain" id="PRO_0000154428" description="Anthranilate phosphoribosyltransferase">
    <location>
        <begin position="1"/>
        <end position="340"/>
    </location>
</feature>
<feature type="binding site" evidence="1">
    <location>
        <position position="78"/>
    </location>
    <ligand>
        <name>5-phospho-alpha-D-ribose 1-diphosphate</name>
        <dbReference type="ChEBI" id="CHEBI:58017"/>
    </ligand>
</feature>
<feature type="binding site" evidence="1">
    <location>
        <position position="78"/>
    </location>
    <ligand>
        <name>anthranilate</name>
        <dbReference type="ChEBI" id="CHEBI:16567"/>
        <label>1</label>
    </ligand>
</feature>
<feature type="binding site" evidence="1">
    <location>
        <begin position="81"/>
        <end position="82"/>
    </location>
    <ligand>
        <name>5-phospho-alpha-D-ribose 1-diphosphate</name>
        <dbReference type="ChEBI" id="CHEBI:58017"/>
    </ligand>
</feature>
<feature type="binding site" evidence="1">
    <location>
        <position position="86"/>
    </location>
    <ligand>
        <name>5-phospho-alpha-D-ribose 1-diphosphate</name>
        <dbReference type="ChEBI" id="CHEBI:58017"/>
    </ligand>
</feature>
<feature type="binding site" evidence="1">
    <location>
        <begin position="88"/>
        <end position="91"/>
    </location>
    <ligand>
        <name>5-phospho-alpha-D-ribose 1-diphosphate</name>
        <dbReference type="ChEBI" id="CHEBI:58017"/>
    </ligand>
</feature>
<feature type="binding site" evidence="1">
    <location>
        <position position="90"/>
    </location>
    <ligand>
        <name>Mg(2+)</name>
        <dbReference type="ChEBI" id="CHEBI:18420"/>
        <label>1</label>
    </ligand>
</feature>
<feature type="binding site" evidence="1">
    <location>
        <begin position="106"/>
        <end position="114"/>
    </location>
    <ligand>
        <name>5-phospho-alpha-D-ribose 1-diphosphate</name>
        <dbReference type="ChEBI" id="CHEBI:58017"/>
    </ligand>
</feature>
<feature type="binding site" evidence="1">
    <location>
        <position position="109"/>
    </location>
    <ligand>
        <name>anthranilate</name>
        <dbReference type="ChEBI" id="CHEBI:16567"/>
        <label>1</label>
    </ligand>
</feature>
<feature type="binding site" evidence="1">
    <location>
        <position position="118"/>
    </location>
    <ligand>
        <name>5-phospho-alpha-D-ribose 1-diphosphate</name>
        <dbReference type="ChEBI" id="CHEBI:58017"/>
    </ligand>
</feature>
<feature type="binding site" evidence="1">
    <location>
        <position position="164"/>
    </location>
    <ligand>
        <name>anthranilate</name>
        <dbReference type="ChEBI" id="CHEBI:16567"/>
        <label>2</label>
    </ligand>
</feature>
<feature type="binding site" evidence="1">
    <location>
        <position position="223"/>
    </location>
    <ligand>
        <name>Mg(2+)</name>
        <dbReference type="ChEBI" id="CHEBI:18420"/>
        <label>2</label>
    </ligand>
</feature>
<feature type="binding site" evidence="1">
    <location>
        <position position="224"/>
    </location>
    <ligand>
        <name>Mg(2+)</name>
        <dbReference type="ChEBI" id="CHEBI:18420"/>
        <label>1</label>
    </ligand>
</feature>
<feature type="binding site" evidence="1">
    <location>
        <position position="224"/>
    </location>
    <ligand>
        <name>Mg(2+)</name>
        <dbReference type="ChEBI" id="CHEBI:18420"/>
        <label>2</label>
    </ligand>
</feature>
<sequence>MNHRLSALVNGGFLSENEANKLMHDMMSGFLTDAEVAASLSILAHRGETAEEMTGFVKAMRQNAAPMERALDVVDTCGTGGDGLSTFNISTAAAIVRSAAGAKIAKHGNRSVSSKSGSADVLECLGIHIQSTPEETRRQIQEKNMGFLFAPLYHSSMKQVAAVRKQLGFRTVFNLLGPLCHPMQAKKQIIGVYSKEKAKLMAEALAPLEPEHVLFVCGEDGLDELTITANSYVIELKKDVMTEYTLNPEDFGLQKGYLSEIQVQSPEESAKLIQNILNHQTEGAPLHITALNAGAALYVAGKSESLMAGTLKAIETIKNGAAKEQLARLKQKTREEEIYA</sequence>
<reference key="1">
    <citation type="journal article" date="1990" name="Gene">
        <title>The structure of the trpE, trpD and 5' trpC genes of Bacillus pumilus.</title>
        <authorList>
            <person name="Rivas M.V."/>
            <person name="Jarvis E.D."/>
            <person name="Rudner R."/>
        </authorList>
    </citation>
    <scope>NUCLEOTIDE SEQUENCE [GENOMIC DNA]</scope>
    <source>
        <strain>RUB502</strain>
    </source>
</reference>
<reference key="2">
    <citation type="journal article" date="1990" name="Gene">
        <authorList>
            <person name="Rivas M.V."/>
            <person name="Jarvis E.D."/>
            <person name="Rudner R."/>
        </authorList>
    </citation>
    <scope>ERRATUM OF PUBMED:2110100</scope>
</reference>
<gene>
    <name evidence="1" type="primary">trpD</name>
</gene>
<comment type="function">
    <text evidence="1">Catalyzes the transfer of the phosphoribosyl group of 5-phosphorylribose-1-pyrophosphate (PRPP) to anthranilate to yield N-(5'-phosphoribosyl)-anthranilate (PRA).</text>
</comment>
<comment type="catalytic activity">
    <reaction evidence="1">
        <text>N-(5-phospho-beta-D-ribosyl)anthranilate + diphosphate = 5-phospho-alpha-D-ribose 1-diphosphate + anthranilate</text>
        <dbReference type="Rhea" id="RHEA:11768"/>
        <dbReference type="ChEBI" id="CHEBI:16567"/>
        <dbReference type="ChEBI" id="CHEBI:18277"/>
        <dbReference type="ChEBI" id="CHEBI:33019"/>
        <dbReference type="ChEBI" id="CHEBI:58017"/>
        <dbReference type="EC" id="2.4.2.18"/>
    </reaction>
</comment>
<comment type="cofactor">
    <cofactor evidence="1">
        <name>Mg(2+)</name>
        <dbReference type="ChEBI" id="CHEBI:18420"/>
    </cofactor>
    <text evidence="1">Binds 2 magnesium ions per monomer.</text>
</comment>
<comment type="pathway">
    <text evidence="1">Amino-acid biosynthesis; L-tryptophan biosynthesis; L-tryptophan from chorismate: step 2/5.</text>
</comment>
<comment type="subunit">
    <text evidence="1">Homodimer.</text>
</comment>
<comment type="similarity">
    <text evidence="1">Belongs to the anthranilate phosphoribosyltransferase family.</text>
</comment>
<name>TRPD_BACPU</name>
<dbReference type="EC" id="2.4.2.18" evidence="1"/>
<dbReference type="EMBL" id="M36468">
    <property type="protein sequence ID" value="AAB02273.1"/>
    <property type="molecule type" value="Genomic_DNA"/>
</dbReference>
<dbReference type="PIR" id="JH0099">
    <property type="entry name" value="JH0099"/>
</dbReference>
<dbReference type="SMR" id="P18261"/>
<dbReference type="UniPathway" id="UPA00035">
    <property type="reaction ID" value="UER00041"/>
</dbReference>
<dbReference type="GO" id="GO:0005829">
    <property type="term" value="C:cytosol"/>
    <property type="evidence" value="ECO:0007669"/>
    <property type="project" value="TreeGrafter"/>
</dbReference>
<dbReference type="GO" id="GO:0004048">
    <property type="term" value="F:anthranilate phosphoribosyltransferase activity"/>
    <property type="evidence" value="ECO:0007669"/>
    <property type="project" value="UniProtKB-UniRule"/>
</dbReference>
<dbReference type="GO" id="GO:0000287">
    <property type="term" value="F:magnesium ion binding"/>
    <property type="evidence" value="ECO:0007669"/>
    <property type="project" value="UniProtKB-UniRule"/>
</dbReference>
<dbReference type="GO" id="GO:0000162">
    <property type="term" value="P:L-tryptophan biosynthetic process"/>
    <property type="evidence" value="ECO:0007669"/>
    <property type="project" value="UniProtKB-UniRule"/>
</dbReference>
<dbReference type="FunFam" id="3.40.1030.10:FF:000002">
    <property type="entry name" value="Anthranilate phosphoribosyltransferase"/>
    <property type="match status" value="1"/>
</dbReference>
<dbReference type="Gene3D" id="3.40.1030.10">
    <property type="entry name" value="Nucleoside phosphorylase/phosphoribosyltransferase catalytic domain"/>
    <property type="match status" value="1"/>
</dbReference>
<dbReference type="Gene3D" id="1.20.970.10">
    <property type="entry name" value="Transferase, Pyrimidine Nucleoside Phosphorylase, Chain C"/>
    <property type="match status" value="1"/>
</dbReference>
<dbReference type="HAMAP" id="MF_00211">
    <property type="entry name" value="TrpD"/>
    <property type="match status" value="1"/>
</dbReference>
<dbReference type="InterPro" id="IPR005940">
    <property type="entry name" value="Anthranilate_Pribosyl_Tfrase"/>
</dbReference>
<dbReference type="InterPro" id="IPR000312">
    <property type="entry name" value="Glycosyl_Trfase_fam3"/>
</dbReference>
<dbReference type="InterPro" id="IPR017459">
    <property type="entry name" value="Glycosyl_Trfase_fam3_N_dom"/>
</dbReference>
<dbReference type="InterPro" id="IPR036320">
    <property type="entry name" value="Glycosyl_Trfase_fam3_N_dom_sf"/>
</dbReference>
<dbReference type="InterPro" id="IPR035902">
    <property type="entry name" value="Nuc_phospho_transferase"/>
</dbReference>
<dbReference type="NCBIfam" id="TIGR01245">
    <property type="entry name" value="trpD"/>
    <property type="match status" value="1"/>
</dbReference>
<dbReference type="PANTHER" id="PTHR43285">
    <property type="entry name" value="ANTHRANILATE PHOSPHORIBOSYLTRANSFERASE"/>
    <property type="match status" value="1"/>
</dbReference>
<dbReference type="PANTHER" id="PTHR43285:SF2">
    <property type="entry name" value="ANTHRANILATE PHOSPHORIBOSYLTRANSFERASE"/>
    <property type="match status" value="1"/>
</dbReference>
<dbReference type="Pfam" id="PF02885">
    <property type="entry name" value="Glycos_trans_3N"/>
    <property type="match status" value="1"/>
</dbReference>
<dbReference type="Pfam" id="PF00591">
    <property type="entry name" value="Glycos_transf_3"/>
    <property type="match status" value="1"/>
</dbReference>
<dbReference type="SUPFAM" id="SSF52418">
    <property type="entry name" value="Nucleoside phosphorylase/phosphoribosyltransferase catalytic domain"/>
    <property type="match status" value="1"/>
</dbReference>
<dbReference type="SUPFAM" id="SSF47648">
    <property type="entry name" value="Nucleoside phosphorylase/phosphoribosyltransferase N-terminal domain"/>
    <property type="match status" value="1"/>
</dbReference>
<keyword id="KW-0028">Amino-acid biosynthesis</keyword>
<keyword id="KW-0057">Aromatic amino acid biosynthesis</keyword>
<keyword id="KW-0328">Glycosyltransferase</keyword>
<keyword id="KW-0460">Magnesium</keyword>
<keyword id="KW-0479">Metal-binding</keyword>
<keyword id="KW-0808">Transferase</keyword>
<keyword id="KW-0822">Tryptophan biosynthesis</keyword>
<accession>P18261</accession>